<reference key="1">
    <citation type="journal article" date="2009" name="PLoS Genet.">
        <title>Organised genome dynamics in the Escherichia coli species results in highly diverse adaptive paths.</title>
        <authorList>
            <person name="Touchon M."/>
            <person name="Hoede C."/>
            <person name="Tenaillon O."/>
            <person name="Barbe V."/>
            <person name="Baeriswyl S."/>
            <person name="Bidet P."/>
            <person name="Bingen E."/>
            <person name="Bonacorsi S."/>
            <person name="Bouchier C."/>
            <person name="Bouvet O."/>
            <person name="Calteau A."/>
            <person name="Chiapello H."/>
            <person name="Clermont O."/>
            <person name="Cruveiller S."/>
            <person name="Danchin A."/>
            <person name="Diard M."/>
            <person name="Dossat C."/>
            <person name="Karoui M.E."/>
            <person name="Frapy E."/>
            <person name="Garry L."/>
            <person name="Ghigo J.M."/>
            <person name="Gilles A.M."/>
            <person name="Johnson J."/>
            <person name="Le Bouguenec C."/>
            <person name="Lescat M."/>
            <person name="Mangenot S."/>
            <person name="Martinez-Jehanne V."/>
            <person name="Matic I."/>
            <person name="Nassif X."/>
            <person name="Oztas S."/>
            <person name="Petit M.A."/>
            <person name="Pichon C."/>
            <person name="Rouy Z."/>
            <person name="Ruf C.S."/>
            <person name="Schneider D."/>
            <person name="Tourret J."/>
            <person name="Vacherie B."/>
            <person name="Vallenet D."/>
            <person name="Medigue C."/>
            <person name="Rocha E.P.C."/>
            <person name="Denamur E."/>
        </authorList>
    </citation>
    <scope>NUCLEOTIDE SEQUENCE [LARGE SCALE GENOMIC DNA]</scope>
    <source>
        <strain>55989 / EAEC</strain>
    </source>
</reference>
<proteinExistence type="inferred from homology"/>
<sequence length="133" mass="15094">MQRVTITLDDDLLETLDSLSQRRGYNNRSEAIRDILRSALAQEATQQHGTQGFAVLSYVYEHEKRDLASRIVSTQHHHHDLSVATLHVHINHDDCLEIAVLKGDMGDVQHFADDVIAQRGVRHGHLQCLPKED</sequence>
<accession>B7L5T4</accession>
<name>NIKR_ECO55</name>
<protein>
    <recommendedName>
        <fullName evidence="1">Nickel-responsive regulator</fullName>
    </recommendedName>
</protein>
<dbReference type="EMBL" id="CU928145">
    <property type="protein sequence ID" value="CAV00301.1"/>
    <property type="molecule type" value="Genomic_DNA"/>
</dbReference>
<dbReference type="RefSeq" id="WP_001190062.1">
    <property type="nucleotide sequence ID" value="NZ_CP028304.1"/>
</dbReference>
<dbReference type="SMR" id="B7L5T4"/>
<dbReference type="GeneID" id="93778510"/>
<dbReference type="KEGG" id="eck:EC55989_3889"/>
<dbReference type="HOGENOM" id="CLU_113319_1_4_6"/>
<dbReference type="Proteomes" id="UP000000746">
    <property type="component" value="Chromosome"/>
</dbReference>
<dbReference type="GO" id="GO:0003700">
    <property type="term" value="F:DNA-binding transcription factor activity"/>
    <property type="evidence" value="ECO:0007669"/>
    <property type="project" value="UniProtKB-UniRule"/>
</dbReference>
<dbReference type="GO" id="GO:0016151">
    <property type="term" value="F:nickel cation binding"/>
    <property type="evidence" value="ECO:0007669"/>
    <property type="project" value="UniProtKB-UniRule"/>
</dbReference>
<dbReference type="GO" id="GO:0043565">
    <property type="term" value="F:sequence-specific DNA binding"/>
    <property type="evidence" value="ECO:0007669"/>
    <property type="project" value="UniProtKB-ARBA"/>
</dbReference>
<dbReference type="GO" id="GO:0010045">
    <property type="term" value="P:response to nickel cation"/>
    <property type="evidence" value="ECO:0007669"/>
    <property type="project" value="InterPro"/>
</dbReference>
<dbReference type="CDD" id="cd22231">
    <property type="entry name" value="RHH_NikR_HicB-like"/>
    <property type="match status" value="1"/>
</dbReference>
<dbReference type="FunFam" id="1.10.1220.10:FF:000001">
    <property type="entry name" value="Nickel-responsive regulator"/>
    <property type="match status" value="1"/>
</dbReference>
<dbReference type="FunFam" id="3.30.70.1150:FF:000002">
    <property type="entry name" value="Nickel-responsive regulator"/>
    <property type="match status" value="1"/>
</dbReference>
<dbReference type="Gene3D" id="3.30.70.1150">
    <property type="entry name" value="ACT-like. Chain A, domain 2"/>
    <property type="match status" value="1"/>
</dbReference>
<dbReference type="Gene3D" id="1.10.1220.10">
    <property type="entry name" value="Met repressor-like"/>
    <property type="match status" value="1"/>
</dbReference>
<dbReference type="HAMAP" id="MF_00476">
    <property type="entry name" value="NikR"/>
    <property type="match status" value="1"/>
</dbReference>
<dbReference type="InterPro" id="IPR027271">
    <property type="entry name" value="Acetolactate_synth/TF_NikR_C"/>
</dbReference>
<dbReference type="InterPro" id="IPR045865">
    <property type="entry name" value="ACT-like_dom_sf"/>
</dbReference>
<dbReference type="InterPro" id="IPR013321">
    <property type="entry name" value="Arc_rbn_hlx_hlx"/>
</dbReference>
<dbReference type="InterPro" id="IPR002145">
    <property type="entry name" value="CopG"/>
</dbReference>
<dbReference type="InterPro" id="IPR050192">
    <property type="entry name" value="CopG/NikR_regulator"/>
</dbReference>
<dbReference type="InterPro" id="IPR022988">
    <property type="entry name" value="Ni_resp_reg_NikR"/>
</dbReference>
<dbReference type="InterPro" id="IPR014160">
    <property type="entry name" value="Nickel_NikR_proteobac"/>
</dbReference>
<dbReference type="InterPro" id="IPR010985">
    <property type="entry name" value="Ribbon_hlx_hlx"/>
</dbReference>
<dbReference type="InterPro" id="IPR014864">
    <property type="entry name" value="TF_NikR_Ni-bd_C"/>
</dbReference>
<dbReference type="NCBIfam" id="TIGR02793">
    <property type="entry name" value="nikR"/>
    <property type="match status" value="1"/>
</dbReference>
<dbReference type="NCBIfam" id="NF002815">
    <property type="entry name" value="PRK02967.1"/>
    <property type="match status" value="1"/>
</dbReference>
<dbReference type="NCBIfam" id="NF003381">
    <property type="entry name" value="PRK04460.1"/>
    <property type="match status" value="1"/>
</dbReference>
<dbReference type="PANTHER" id="PTHR34719">
    <property type="entry name" value="NICKEL-RESPONSIVE REGULATOR"/>
    <property type="match status" value="1"/>
</dbReference>
<dbReference type="PANTHER" id="PTHR34719:SF2">
    <property type="entry name" value="NICKEL-RESPONSIVE REGULATOR"/>
    <property type="match status" value="1"/>
</dbReference>
<dbReference type="Pfam" id="PF08753">
    <property type="entry name" value="NikR_C"/>
    <property type="match status" value="1"/>
</dbReference>
<dbReference type="Pfam" id="PF01402">
    <property type="entry name" value="RHH_1"/>
    <property type="match status" value="1"/>
</dbReference>
<dbReference type="SUPFAM" id="SSF55021">
    <property type="entry name" value="ACT-like"/>
    <property type="match status" value="1"/>
</dbReference>
<dbReference type="SUPFAM" id="SSF47598">
    <property type="entry name" value="Ribbon-helix-helix"/>
    <property type="match status" value="1"/>
</dbReference>
<evidence type="ECO:0000255" key="1">
    <source>
        <dbReference type="HAMAP-Rule" id="MF_00476"/>
    </source>
</evidence>
<gene>
    <name evidence="1" type="primary">nikR</name>
    <name type="ordered locus">EC55989_3889</name>
</gene>
<comment type="function">
    <text evidence="1">Transcriptional repressor of the nikABCDE operon. Is active in the presence of excessive concentrations of intracellular nickel.</text>
</comment>
<comment type="cofactor">
    <cofactor evidence="1">
        <name>Ni(2+)</name>
        <dbReference type="ChEBI" id="CHEBI:49786"/>
    </cofactor>
    <text evidence="1">Binds 1 nickel ion per subunit.</text>
</comment>
<comment type="subunit">
    <text evidence="1">Homotetramer.</text>
</comment>
<comment type="similarity">
    <text evidence="1">Belongs to the transcriptional regulatory CopG/NikR family.</text>
</comment>
<keyword id="KW-0238">DNA-binding</keyword>
<keyword id="KW-0479">Metal-binding</keyword>
<keyword id="KW-0533">Nickel</keyword>
<keyword id="KW-1185">Reference proteome</keyword>
<keyword id="KW-0678">Repressor</keyword>
<keyword id="KW-0804">Transcription</keyword>
<keyword id="KW-0805">Transcription regulation</keyword>
<organism>
    <name type="scientific">Escherichia coli (strain 55989 / EAEC)</name>
    <dbReference type="NCBI Taxonomy" id="585055"/>
    <lineage>
        <taxon>Bacteria</taxon>
        <taxon>Pseudomonadati</taxon>
        <taxon>Pseudomonadota</taxon>
        <taxon>Gammaproteobacteria</taxon>
        <taxon>Enterobacterales</taxon>
        <taxon>Enterobacteriaceae</taxon>
        <taxon>Escherichia</taxon>
    </lineage>
</organism>
<feature type="chain" id="PRO_1000135552" description="Nickel-responsive regulator">
    <location>
        <begin position="1"/>
        <end position="133"/>
    </location>
</feature>
<feature type="binding site" evidence="1">
    <location>
        <position position="76"/>
    </location>
    <ligand>
        <name>Ni(2+)</name>
        <dbReference type="ChEBI" id="CHEBI:49786"/>
    </ligand>
</feature>
<feature type="binding site" evidence="1">
    <location>
        <position position="87"/>
    </location>
    <ligand>
        <name>Ni(2+)</name>
        <dbReference type="ChEBI" id="CHEBI:49786"/>
    </ligand>
</feature>
<feature type="binding site" evidence="1">
    <location>
        <position position="89"/>
    </location>
    <ligand>
        <name>Ni(2+)</name>
        <dbReference type="ChEBI" id="CHEBI:49786"/>
    </ligand>
</feature>
<feature type="binding site" evidence="1">
    <location>
        <position position="95"/>
    </location>
    <ligand>
        <name>Ni(2+)</name>
        <dbReference type="ChEBI" id="CHEBI:49786"/>
    </ligand>
</feature>